<sequence>MASSSNYNTYMQYLNPPPYADHGANQLIPADQLSNQQGITPNYVGDLNLDDQFKGNVCHAFTLEAIIDISAYNEPTVKGVPAWLPLGIMSNFEYPLAHTVAALLTGSYTITQFTHNGQKFVRVNRLGTGIPAHPLRMLREGNQAFIQNMVIPRNFSTNQFTYNLTNLVLSVQKLPDDAWRPSKDKLIGNTMHPAVSIHPNLPPIVLPTVKKQAYRQHKNPNNGPLLAISGILHQLRVEKVPEKTSLFRISLPADMFSVKEGMMKKRGENSPVVYFQAPENFPLNGFNNRQVVLAYANPTLSAV</sequence>
<organismHost>
    <name type="scientific">Chlorocebus aethiops</name>
    <name type="common">Green monkey</name>
    <name type="synonym">Cercopithecus aethiops</name>
    <dbReference type="NCBI Taxonomy" id="9534"/>
</organismHost>
<organismHost>
    <name type="scientific">Homo sapiens</name>
    <name type="common">Human</name>
    <dbReference type="NCBI Taxonomy" id="9606"/>
</organismHost>
<organismHost>
    <name type="scientific">Rousettus aegyptiacus</name>
    <name type="common">Egyptian fruit bat</name>
    <name type="synonym">Pteropus aegyptiacus</name>
    <dbReference type="NCBI Taxonomy" id="9407"/>
</organismHost>
<dbReference type="EMBL" id="X64406">
    <property type="protein sequence ID" value="CAA45749.1"/>
    <property type="molecule type" value="Genomic_RNA"/>
</dbReference>
<dbReference type="EMBL" id="Z29337">
    <property type="protein sequence ID" value="CAA82538.1"/>
    <property type="molecule type" value="Genomic_RNA"/>
</dbReference>
<dbReference type="PIR" id="S32583">
    <property type="entry name" value="S32583"/>
</dbReference>
<dbReference type="SMR" id="Q03040"/>
<dbReference type="IntAct" id="Q03040">
    <property type="interactions" value="8"/>
</dbReference>
<dbReference type="Proteomes" id="UP000007772">
    <property type="component" value="Genome"/>
</dbReference>
<dbReference type="GO" id="GO:0033645">
    <property type="term" value="C:host cell endomembrane system"/>
    <property type="evidence" value="ECO:0007669"/>
    <property type="project" value="UniProtKB-SubCell"/>
</dbReference>
<dbReference type="GO" id="GO:0044185">
    <property type="term" value="C:host cell late endosome membrane"/>
    <property type="evidence" value="ECO:0007669"/>
    <property type="project" value="UniProtKB-SubCell"/>
</dbReference>
<dbReference type="GO" id="GO:0020002">
    <property type="term" value="C:host cell plasma membrane"/>
    <property type="evidence" value="ECO:0007669"/>
    <property type="project" value="UniProtKB-SubCell"/>
</dbReference>
<dbReference type="GO" id="GO:0016020">
    <property type="term" value="C:membrane"/>
    <property type="evidence" value="ECO:0007669"/>
    <property type="project" value="UniProtKB-KW"/>
</dbReference>
<dbReference type="GO" id="GO:0055036">
    <property type="term" value="C:virion membrane"/>
    <property type="evidence" value="ECO:0007669"/>
    <property type="project" value="UniProtKB-SubCell"/>
</dbReference>
<dbReference type="GO" id="GO:0039660">
    <property type="term" value="F:structural constituent of virion"/>
    <property type="evidence" value="ECO:0007669"/>
    <property type="project" value="UniProtKB-KW"/>
</dbReference>
<dbReference type="GO" id="GO:0052170">
    <property type="term" value="P:symbiont-mediated suppression of host innate immune response"/>
    <property type="evidence" value="ECO:0007669"/>
    <property type="project" value="UniProtKB-KW"/>
</dbReference>
<dbReference type="GO" id="GO:0039576">
    <property type="term" value="P:symbiont-mediated suppression of host JAK-STAT cascade via inhibition of JAK1 activity"/>
    <property type="evidence" value="ECO:0007669"/>
    <property type="project" value="UniProtKB-KW"/>
</dbReference>
<dbReference type="GO" id="GO:0039502">
    <property type="term" value="P:symbiont-mediated suppression of host type I interferon-mediated signaling pathway"/>
    <property type="evidence" value="ECO:0007669"/>
    <property type="project" value="UniProtKB-KW"/>
</dbReference>
<dbReference type="GO" id="GO:0039702">
    <property type="term" value="P:viral budding via host ESCRT complex"/>
    <property type="evidence" value="ECO:0007669"/>
    <property type="project" value="UniProtKB-KW"/>
</dbReference>
<dbReference type="Gene3D" id="2.70.20.20">
    <property type="entry name" value="Matrix protein VP40, N-terminal domain"/>
    <property type="match status" value="1"/>
</dbReference>
<dbReference type="InterPro" id="IPR008986">
    <property type="entry name" value="EV_matrix"/>
</dbReference>
<dbReference type="InterPro" id="IPR043079">
    <property type="entry name" value="EV_matrix_protein_N"/>
</dbReference>
<dbReference type="InterPro" id="IPR038057">
    <property type="entry name" value="EV_matrix_sf"/>
</dbReference>
<dbReference type="Pfam" id="PF07447">
    <property type="entry name" value="Matrix_Filo"/>
    <property type="match status" value="1"/>
</dbReference>
<dbReference type="PIRSF" id="PIRSF018327">
    <property type="entry name" value="VP40_FiloV"/>
    <property type="match status" value="1"/>
</dbReference>
<dbReference type="SUPFAM" id="SSF50012">
    <property type="entry name" value="EV matrix protein"/>
    <property type="match status" value="1"/>
</dbReference>
<comment type="function">
    <text evidence="1 2">Plays an essential role virus particle assembly and budding. Promotes virus assembly and budding by interacting with host proteins of the multivesicular body pathway. The interaction with host E3 ubiquitin ligase SMURF2 facilitates virus budding (By similarity). The interaction with the nucleocapsid and the plasma membrane may also facilitate virus budding. Specific interactions with membrane-associated GP and VP24 during the budding process may also occur (By similarity). May play a role in genome replication (By similarity).</text>
</comment>
<comment type="subunit">
    <text evidence="2">Exists as a dimer until it reorganizes at the plasma membrane into multimeric form. Interacts with host TSG101. Interacts (via PPXY motif) with SMURF2 (via WW domains); the interaction positively regulates virus budding.</text>
</comment>
<comment type="interaction">
    <interactant intactId="EBI-40244005">
        <id>Q03040</id>
    </interactant>
    <interactant intactId="EBI-1564678">
        <id>Q96J02</id>
        <label>ITCH</label>
    </interactant>
    <organismsDiffer>true</organismsDiffer>
    <experiments>2</experiments>
</comment>
<comment type="subcellular location">
    <subcellularLocation>
        <location evidence="2">Virion membrane</location>
        <topology evidence="2">Peripheral membrane protein</topology>
    </subcellularLocation>
    <subcellularLocation>
        <location evidence="2">Host late endosome membrane</location>
        <topology evidence="2">Peripheral membrane protein</topology>
    </subcellularLocation>
    <subcellularLocation>
        <location evidence="2">Host cell membrane</location>
        <topology evidence="2">Peripheral membrane protein</topology>
        <orientation evidence="2">Cytoplasmic side</orientation>
    </subcellularLocation>
    <subcellularLocation>
        <location evidence="2">Host endomembrane system</location>
        <topology evidence="2">Peripheral membrane protein</topology>
    </subcellularLocation>
    <text evidence="2">In virion, localizes on the intravirional side of the membrane. In the host cell, it is found associated with virus-induced membrane proliferation foci and probably also in multivesicular bodies. These VP40-enriched membrane clusters are then redistributed to the plasma membrane where budding takes place.</text>
</comment>
<comment type="domain">
    <text evidence="2 3">Late-budding domains (L domains) are short sequence motifs essential for viral particle budding. They recruit proteins of the host ESCRT machinery (Endosomal Sorting Complex Required for Transport) or ESCRT-associated proteins. VP40 contains one L domain: a PPXY motif which potentially interacts with the WW domain 3 of NEDD4 E3 ubiquitin ligase and the three WW domains of SMURF2 E3 ubiquitin ligase.</text>
</comment>
<comment type="miscellaneous">
    <text>Most abundant protein in the virion.</text>
</comment>
<comment type="similarity">
    <text evidence="4">Belongs to the filoviridae matrix protein VP40 family.</text>
</comment>
<evidence type="ECO:0000250" key="1"/>
<evidence type="ECO:0000250" key="2">
    <source>
        <dbReference type="UniProtKB" id="P35260"/>
    </source>
</evidence>
<evidence type="ECO:0000250" key="3">
    <source>
        <dbReference type="UniProtKB" id="Q05128"/>
    </source>
</evidence>
<evidence type="ECO:0000305" key="4"/>
<feature type="chain" id="PRO_0000222166" description="Matrix protein VP40">
    <location>
        <begin position="1"/>
        <end position="303"/>
    </location>
</feature>
<feature type="short sequence motif" description="PPXY motif" evidence="1">
    <location>
        <begin position="16"/>
        <end position="19"/>
    </location>
</feature>
<protein>
    <recommendedName>
        <fullName>Matrix protein VP40</fullName>
    </recommendedName>
    <alternativeName>
        <fullName evidence="2">Marburg VP40</fullName>
        <shortName evidence="2">mVP40</shortName>
    </alternativeName>
    <alternativeName>
        <fullName>Membrane-associated protein VP40</fullName>
    </alternativeName>
</protein>
<organism>
    <name type="scientific">Lake Victoria marburgvirus (strain Popp-67)</name>
    <name type="common">MARV</name>
    <name type="synonym">Marburg virus (strain West Germany/Popp/1967)</name>
    <dbReference type="NCBI Taxonomy" id="33728"/>
    <lineage>
        <taxon>Viruses</taxon>
        <taxon>Riboviria</taxon>
        <taxon>Orthornavirae</taxon>
        <taxon>Negarnaviricota</taxon>
        <taxon>Haploviricotina</taxon>
        <taxon>Monjiviricetes</taxon>
        <taxon>Mononegavirales</taxon>
        <taxon>Filoviridae</taxon>
        <taxon>Orthomarburgvirus</taxon>
        <taxon>Orthomarburgvirus marburgense</taxon>
    </lineage>
</organism>
<proteinExistence type="evidence at protein level"/>
<keyword id="KW-1032">Host cell membrane</keyword>
<keyword id="KW-1039">Host endosome</keyword>
<keyword id="KW-1043">Host membrane</keyword>
<keyword id="KW-0945">Host-virus interaction</keyword>
<keyword id="KW-1090">Inhibition of host innate immune response by virus</keyword>
<keyword id="KW-1114">Inhibition of host interferon signaling pathway by virus</keyword>
<keyword id="KW-1096">Inhibition of host JAK1 by virus</keyword>
<keyword id="KW-0922">Interferon antiviral system evasion</keyword>
<keyword id="KW-0472">Membrane</keyword>
<keyword id="KW-1198">Viral budding</keyword>
<keyword id="KW-1187">Viral budding via the host ESCRT complexes</keyword>
<keyword id="KW-0899">Viral immunoevasion</keyword>
<keyword id="KW-0468">Viral matrix protein</keyword>
<keyword id="KW-1188">Viral release from host cell</keyword>
<keyword id="KW-0946">Virion</keyword>
<gene>
    <name type="primary">VP40</name>
</gene>
<name>VP40_MABVP</name>
<reference key="1">
    <citation type="journal article" date="1993" name="FEBS Lett.">
        <title>The VP35 and VP40 proteins of filoviruses. Homology between Marburg and Ebola viruses.</title>
        <authorList>
            <person name="Bukreyev A.A."/>
            <person name="Volchkov V.E."/>
            <person name="Blinov V.M."/>
            <person name="Netesov S.V."/>
        </authorList>
    </citation>
    <scope>NUCLEOTIDE SEQUENCE [GENOMIC RNA]</scope>
</reference>
<reference key="2">
    <citation type="journal article" date="1995" name="Arch. Virol.">
        <title>The complete nucleotide sequence of the Popp (1967) strain of Marburg virus: a comparison with the Musoke (1980) strain.</title>
        <authorList>
            <person name="Bukreyev A.A."/>
            <person name="Volchkov V.E."/>
            <person name="Blinov V.M."/>
            <person name="Dryga S.A."/>
            <person name="Netesov S.V."/>
        </authorList>
    </citation>
    <scope>NUCLEOTIDE SEQUENCE [GENOMIC RNA]</scope>
</reference>
<accession>Q03040</accession>